<name>ACDA_ASPCN</name>
<feature type="chain" id="PRO_0000456691" description="Indoleamine 2,3-dioxygenase acdA">
    <location>
        <begin position="1"/>
        <end position="405"/>
    </location>
</feature>
<feature type="binding site" description="proximal binding residue" evidence="1">
    <location>
        <position position="312"/>
    </location>
    <ligand>
        <name>heme</name>
        <dbReference type="ChEBI" id="CHEBI:30413"/>
    </ligand>
    <ligandPart>
        <name>Fe</name>
        <dbReference type="ChEBI" id="CHEBI:18248"/>
    </ligandPart>
</feature>
<comment type="function">
    <text evidence="2">Indoleamine 2,3-dioxygenase; part of the gene cluster that mediates the biosynthesis of aspcandine, a pyrrolobenzazepine alkaloid (PubMed:35748771). Initially, the indoleamine 2,3-dioxygenase acdA accepts L-tryptophan and performs the oxidative opening of the indole ring to yield N'-formyl-L-kynurenine, which undergoes the spontaneous deformylation reaction to provide L-kynurenine (PubMed:35748771). The kynurenine 3-monooxygenase acdD then hydroxylates L-kynurenine to afford 3-hydroxy-L-kynurenine (PubMed:35748771). 3-hydroxy-L-kynurenine is activated by the A domain of the NRPS-PKS acdB and subsequently loaded onto the enzyme (PubMed:35748771). The KS domain conducts the decarboxylative condensation of the 3-hydroxy-L-kynurenyl and malonyl moieties, and subsequent nucleophilic attacks by the two amino groups would occur nonenzymatically at two distinct positions, achieving the chain release and the construction of the tricyclic system (PubMed:35748771). Finally, a dehydration reaction completes the biosynthesis to yield aspcandine (PubMed:35748771).</text>
</comment>
<comment type="catalytic activity">
    <reaction evidence="2">
        <text>L-tryptophan + O2 = N-formyl-L-kynurenine</text>
        <dbReference type="Rhea" id="RHEA:24536"/>
        <dbReference type="ChEBI" id="CHEBI:15379"/>
        <dbReference type="ChEBI" id="CHEBI:57912"/>
        <dbReference type="ChEBI" id="CHEBI:58629"/>
        <dbReference type="EC" id="1.13.11.52"/>
    </reaction>
    <physiologicalReaction direction="left-to-right" evidence="2">
        <dbReference type="Rhea" id="RHEA:24537"/>
    </physiologicalReaction>
</comment>
<comment type="cofactor">
    <cofactor evidence="1">
        <name>heme</name>
        <dbReference type="ChEBI" id="CHEBI:30413"/>
    </cofactor>
    <text evidence="1">Binds 1 heme group per subunit.</text>
</comment>
<comment type="pathway">
    <text evidence="2">Secondary metabolite biosynthesis.</text>
</comment>
<comment type="similarity">
    <text evidence="4">Belongs to the indoleamine 2,3-dioxygenase family.</text>
</comment>
<proteinExistence type="evidence at protein level"/>
<sequence length="405" mass="45236">MADRSDIIIENYQVSPRIGFLPDKPPLARLPHPYYAGWEETISRVAPSRGDGRAREYIDEMPLLSTGKLRVLPEWHRAYTLLSILSQVYIWDGDEPSNRIPASIASPLLAVSEHLGLNPCASFASFCLWNIRPVGRHGLNYAAAYEPENLGQITSFTGTTDEEWFFSISAAIEARGGCLIPGMFDTIEAAREGNSQRVQEFLGTLASCVRHMCKDLKRMYEGCAPSVFYHDVRPFLNGGKGVNKDTQTPGGVFYENESGGGQWHQYQGGSNAQSSLIQLLDIFLGVDHSITAANKPHEGYHREMQSYMPGKHRQFLQLMSRLSNVREFVLCHPVTAEIRIEYSRATAELVALRQTHMIMASRYIVMQGRKGSMCRDSSKGTGGTEFMPFLKDARDCTLATCCPRP</sequence>
<dbReference type="EC" id="1.13.11.52" evidence="2"/>
<dbReference type="EMBL" id="KZ559173">
    <property type="protein sequence ID" value="PLB34721.1"/>
    <property type="molecule type" value="Genomic_DNA"/>
</dbReference>
<dbReference type="SMR" id="A0A2I2F272"/>
<dbReference type="STRING" id="41067.A0A2I2F272"/>
<dbReference type="OrthoDB" id="540174at2759"/>
<dbReference type="Proteomes" id="UP000234585">
    <property type="component" value="Unassembled WGS sequence"/>
</dbReference>
<dbReference type="GO" id="GO:0005737">
    <property type="term" value="C:cytoplasm"/>
    <property type="evidence" value="ECO:0007669"/>
    <property type="project" value="TreeGrafter"/>
</dbReference>
<dbReference type="GO" id="GO:0020037">
    <property type="term" value="F:heme binding"/>
    <property type="evidence" value="ECO:0007669"/>
    <property type="project" value="InterPro"/>
</dbReference>
<dbReference type="GO" id="GO:0033754">
    <property type="term" value="F:indoleamine 2,3-dioxygenase activity"/>
    <property type="evidence" value="ECO:0007669"/>
    <property type="project" value="TreeGrafter"/>
</dbReference>
<dbReference type="GO" id="GO:0046872">
    <property type="term" value="F:metal ion binding"/>
    <property type="evidence" value="ECO:0007669"/>
    <property type="project" value="UniProtKB-KW"/>
</dbReference>
<dbReference type="GO" id="GO:0034354">
    <property type="term" value="P:'de novo' NAD biosynthetic process from L-tryptophan"/>
    <property type="evidence" value="ECO:0007669"/>
    <property type="project" value="TreeGrafter"/>
</dbReference>
<dbReference type="GO" id="GO:0019441">
    <property type="term" value="P:L-tryptophan catabolic process to kynurenine"/>
    <property type="evidence" value="ECO:0007669"/>
    <property type="project" value="InterPro"/>
</dbReference>
<dbReference type="Gene3D" id="1.20.58.480">
    <property type="match status" value="1"/>
</dbReference>
<dbReference type="InterPro" id="IPR000898">
    <property type="entry name" value="Indolamine_dOase"/>
</dbReference>
<dbReference type="InterPro" id="IPR037217">
    <property type="entry name" value="Trp/Indoleamine_2_3_dOase-like"/>
</dbReference>
<dbReference type="PANTHER" id="PTHR28657">
    <property type="entry name" value="INDOLEAMINE 2,3-DIOXYGENASE"/>
    <property type="match status" value="1"/>
</dbReference>
<dbReference type="PANTHER" id="PTHR28657:SF10">
    <property type="entry name" value="INDOLEAMINE 2,3-DIOXYGENASE"/>
    <property type="match status" value="1"/>
</dbReference>
<dbReference type="Pfam" id="PF01231">
    <property type="entry name" value="IDO"/>
    <property type="match status" value="1"/>
</dbReference>
<dbReference type="SUPFAM" id="SSF140959">
    <property type="entry name" value="Indolic compounds 2,3-dioxygenase-like"/>
    <property type="match status" value="1"/>
</dbReference>
<dbReference type="PROSITE" id="PS00876">
    <property type="entry name" value="IDO_1"/>
    <property type="match status" value="1"/>
</dbReference>
<keyword id="KW-0223">Dioxygenase</keyword>
<keyword id="KW-0408">Iron</keyword>
<keyword id="KW-0479">Metal-binding</keyword>
<keyword id="KW-0560">Oxidoreductase</keyword>
<keyword id="KW-1185">Reference proteome</keyword>
<accession>A0A2I2F272</accession>
<gene>
    <name evidence="3" type="primary">acdA</name>
    <name type="ORF">BDW47DRAFT_134043</name>
</gene>
<protein>
    <recommendedName>
        <fullName evidence="3">Indoleamine 2,3-dioxygenase acdA</fullName>
        <shortName evidence="3">IDO acdA</shortName>
        <ecNumber evidence="2">1.13.11.52</ecNumber>
    </recommendedName>
    <alternativeName>
        <fullName evidence="3">Aspcandine biosynthesis gene cluster protein A</fullName>
    </alternativeName>
</protein>
<reference key="1">
    <citation type="submission" date="2017-12" db="EMBL/GenBank/DDBJ databases">
        <authorList>
            <consortium name="DOE Joint Genome Institute"/>
            <person name="Haridas S."/>
            <person name="Kjaerbolling I."/>
            <person name="Vesth T.C."/>
            <person name="Frisvad J.C."/>
            <person name="Nybo J.L."/>
            <person name="Theobald S."/>
            <person name="Kuo A."/>
            <person name="Bowyer P."/>
            <person name="Matsuda Y."/>
            <person name="Mondo S."/>
            <person name="Lyhne E.K."/>
            <person name="Kogle M.E."/>
            <person name="Clum A."/>
            <person name="Lipzen A."/>
            <person name="Salamov A."/>
            <person name="Ngan C.Y."/>
            <person name="Daum C."/>
            <person name="Chiniquy J."/>
            <person name="Barry K."/>
            <person name="LaButti K."/>
            <person name="Simmons B.A."/>
            <person name="Magnuson J.K."/>
            <person name="Mortensen U.H."/>
            <person name="Larsen T.O."/>
            <person name="Grigoriev I.V."/>
            <person name="Baker S.E."/>
            <person name="Andersen M.R."/>
            <person name="Nordberg H.P."/>
            <person name="Cantor M.N."/>
            <person name="Hua S.X."/>
        </authorList>
    </citation>
    <scope>NUCLEOTIDE SEQUENCE [LARGE SCALE GENOMIC DNA]</scope>
    <source>
        <strain>CBS 102.13</strain>
    </source>
</reference>
<reference key="2">
    <citation type="journal article" date="2022" name="Org. Lett.">
        <title>Aspcandine: A Pyrrolobenzazepine Alkaloid Synthesized by a Fungal Nonribosomal Peptide Synthetase-Polyketide Synthase Hybrid.</title>
        <authorList>
            <person name="Chen L."/>
            <person name="Tang J.W."/>
            <person name="Liu Y.Y."/>
            <person name="Matsuda Y."/>
        </authorList>
    </citation>
    <scope>FUNCTION</scope>
    <scope>CATALYTIC ACTIVITY</scope>
    <scope>PATHWAY</scope>
</reference>
<organism>
    <name type="scientific">Aspergillus candidus</name>
    <dbReference type="NCBI Taxonomy" id="41067"/>
    <lineage>
        <taxon>Eukaryota</taxon>
        <taxon>Fungi</taxon>
        <taxon>Dikarya</taxon>
        <taxon>Ascomycota</taxon>
        <taxon>Pezizomycotina</taxon>
        <taxon>Eurotiomycetes</taxon>
        <taxon>Eurotiomycetidae</taxon>
        <taxon>Eurotiales</taxon>
        <taxon>Aspergillaceae</taxon>
        <taxon>Aspergillus</taxon>
        <taxon>Aspergillus subgen. Circumdati</taxon>
    </lineage>
</organism>
<evidence type="ECO:0000250" key="1">
    <source>
        <dbReference type="UniProtKB" id="P14902"/>
    </source>
</evidence>
<evidence type="ECO:0000269" key="2">
    <source>
    </source>
</evidence>
<evidence type="ECO:0000303" key="3">
    <source>
    </source>
</evidence>
<evidence type="ECO:0000305" key="4"/>